<dbReference type="EC" id="5.4.99.-"/>
<dbReference type="EMBL" id="BA000022">
    <property type="protein sequence ID" value="BAA18440.1"/>
    <property type="molecule type" value="Genomic_DNA"/>
</dbReference>
<dbReference type="PIR" id="S76181">
    <property type="entry name" value="S76181"/>
</dbReference>
<dbReference type="SMR" id="P74346"/>
<dbReference type="FunCoup" id="P74346">
    <property type="interactions" value="526"/>
</dbReference>
<dbReference type="IntAct" id="P74346">
    <property type="interactions" value="5"/>
</dbReference>
<dbReference type="STRING" id="1148.gene:10499316"/>
<dbReference type="PaxDb" id="1148-1653527"/>
<dbReference type="EnsemblBacteria" id="BAA18440">
    <property type="protein sequence ID" value="BAA18440"/>
    <property type="gene ID" value="BAA18440"/>
</dbReference>
<dbReference type="KEGG" id="syn:slr1629"/>
<dbReference type="eggNOG" id="COG0564">
    <property type="taxonomic scope" value="Bacteria"/>
</dbReference>
<dbReference type="InParanoid" id="P74346"/>
<dbReference type="PhylomeDB" id="P74346"/>
<dbReference type="Proteomes" id="UP000001425">
    <property type="component" value="Chromosome"/>
</dbReference>
<dbReference type="GO" id="GO:0009982">
    <property type="term" value="F:pseudouridine synthase activity"/>
    <property type="evidence" value="ECO:0000318"/>
    <property type="project" value="GO_Central"/>
</dbReference>
<dbReference type="GO" id="GO:0003723">
    <property type="term" value="F:RNA binding"/>
    <property type="evidence" value="ECO:0007669"/>
    <property type="project" value="UniProtKB-KW"/>
</dbReference>
<dbReference type="GO" id="GO:0120159">
    <property type="term" value="F:rRNA pseudouridine synthase activity"/>
    <property type="evidence" value="ECO:0007669"/>
    <property type="project" value="UniProtKB-ARBA"/>
</dbReference>
<dbReference type="GO" id="GO:0000455">
    <property type="term" value="P:enzyme-directed rRNA pseudouridine synthesis"/>
    <property type="evidence" value="ECO:0000318"/>
    <property type="project" value="GO_Central"/>
</dbReference>
<dbReference type="CDD" id="cd02869">
    <property type="entry name" value="PseudoU_synth_RluA_like"/>
    <property type="match status" value="1"/>
</dbReference>
<dbReference type="CDD" id="cd00165">
    <property type="entry name" value="S4"/>
    <property type="match status" value="1"/>
</dbReference>
<dbReference type="Gene3D" id="3.30.2350.10">
    <property type="entry name" value="Pseudouridine synthase"/>
    <property type="match status" value="1"/>
</dbReference>
<dbReference type="Gene3D" id="3.10.290.10">
    <property type="entry name" value="RNA-binding S4 domain"/>
    <property type="match status" value="1"/>
</dbReference>
<dbReference type="InterPro" id="IPR020103">
    <property type="entry name" value="PsdUridine_synth_cat_dom_sf"/>
</dbReference>
<dbReference type="InterPro" id="IPR006224">
    <property type="entry name" value="PsdUridine_synth_RluA-like_CS"/>
</dbReference>
<dbReference type="InterPro" id="IPR006225">
    <property type="entry name" value="PsdUridine_synth_RluC/D"/>
</dbReference>
<dbReference type="InterPro" id="IPR006145">
    <property type="entry name" value="PsdUridine_synth_RsuA/RluA"/>
</dbReference>
<dbReference type="InterPro" id="IPR050188">
    <property type="entry name" value="RluA_PseudoU_synthase"/>
</dbReference>
<dbReference type="InterPro" id="IPR002942">
    <property type="entry name" value="S4_RNA-bd"/>
</dbReference>
<dbReference type="InterPro" id="IPR036986">
    <property type="entry name" value="S4_RNA-bd_sf"/>
</dbReference>
<dbReference type="NCBIfam" id="TIGR00005">
    <property type="entry name" value="rluA_subfam"/>
    <property type="match status" value="1"/>
</dbReference>
<dbReference type="PANTHER" id="PTHR21600">
    <property type="entry name" value="MITOCHONDRIAL RNA PSEUDOURIDINE SYNTHASE"/>
    <property type="match status" value="1"/>
</dbReference>
<dbReference type="PANTHER" id="PTHR21600:SF44">
    <property type="entry name" value="RIBOSOMAL LARGE SUBUNIT PSEUDOURIDINE SYNTHASE D"/>
    <property type="match status" value="1"/>
</dbReference>
<dbReference type="Pfam" id="PF00849">
    <property type="entry name" value="PseudoU_synth_2"/>
    <property type="match status" value="1"/>
</dbReference>
<dbReference type="Pfam" id="PF01479">
    <property type="entry name" value="S4"/>
    <property type="match status" value="1"/>
</dbReference>
<dbReference type="SMART" id="SM00363">
    <property type="entry name" value="S4"/>
    <property type="match status" value="1"/>
</dbReference>
<dbReference type="SUPFAM" id="SSF55174">
    <property type="entry name" value="Alpha-L RNA-binding motif"/>
    <property type="match status" value="1"/>
</dbReference>
<dbReference type="SUPFAM" id="SSF55120">
    <property type="entry name" value="Pseudouridine synthase"/>
    <property type="match status" value="1"/>
</dbReference>
<dbReference type="PROSITE" id="PS01129">
    <property type="entry name" value="PSI_RLU"/>
    <property type="match status" value="1"/>
</dbReference>
<dbReference type="PROSITE" id="PS50889">
    <property type="entry name" value="S4"/>
    <property type="match status" value="1"/>
</dbReference>
<evidence type="ECO:0000250" key="1"/>
<evidence type="ECO:0000255" key="2">
    <source>
        <dbReference type="PROSITE-ProRule" id="PRU00182"/>
    </source>
</evidence>
<evidence type="ECO:0000305" key="3"/>
<sequence>MIDQIIDEVTDSDPYQELLVTADGVAEGTLGVRLDKWLAEQLPELSRSRCQKLIESGQVQRNGLVCQDKNLILKTGDRLVVNIPELIPLDVVAQNIPLDILYEDEQLIIINKPAGLVVHPGPGHPDGTVVNALLAHCPDLAGIGGVQRPGIVHRLDKDTTGAMVVAKTELALHNLQVQLKEKTARRLYWGIVYGSPKEIQGTVNLPVGRHPGDRQKMGIVPVEKGGREAVTHWRLLERIGNHSWLEFQLETGRTHQIRVHSKQMGHPLVGDNLYTSPGSVNVNLPGQALHAHQLSLIHPVSGEIITAIAPMPAHFEKLLVYLRQRIP</sequence>
<gene>
    <name type="ordered locus">slr1629</name>
</gene>
<accession>P74346</accession>
<organism>
    <name type="scientific">Synechocystis sp. (strain ATCC 27184 / PCC 6803 / Kazusa)</name>
    <dbReference type="NCBI Taxonomy" id="1111708"/>
    <lineage>
        <taxon>Bacteria</taxon>
        <taxon>Bacillati</taxon>
        <taxon>Cyanobacteriota</taxon>
        <taxon>Cyanophyceae</taxon>
        <taxon>Synechococcales</taxon>
        <taxon>Merismopediaceae</taxon>
        <taxon>Synechocystis</taxon>
    </lineage>
</organism>
<proteinExistence type="inferred from homology"/>
<reference key="1">
    <citation type="journal article" date="1996" name="DNA Res.">
        <title>Sequence analysis of the genome of the unicellular cyanobacterium Synechocystis sp. strain PCC6803. II. Sequence determination of the entire genome and assignment of potential protein-coding regions.</title>
        <authorList>
            <person name="Kaneko T."/>
            <person name="Sato S."/>
            <person name="Kotani H."/>
            <person name="Tanaka A."/>
            <person name="Asamizu E."/>
            <person name="Nakamura Y."/>
            <person name="Miyajima N."/>
            <person name="Hirosawa M."/>
            <person name="Sugiura M."/>
            <person name="Sasamoto S."/>
            <person name="Kimura T."/>
            <person name="Hosouchi T."/>
            <person name="Matsuno A."/>
            <person name="Muraki A."/>
            <person name="Nakazaki N."/>
            <person name="Naruo K."/>
            <person name="Okumura S."/>
            <person name="Shimpo S."/>
            <person name="Takeuchi C."/>
            <person name="Wada T."/>
            <person name="Watanabe A."/>
            <person name="Yamada M."/>
            <person name="Yasuda M."/>
            <person name="Tabata S."/>
        </authorList>
    </citation>
    <scope>NUCLEOTIDE SEQUENCE [LARGE SCALE GENOMIC DNA]</scope>
    <source>
        <strain>ATCC 27184 / PCC 6803 / Kazusa</strain>
    </source>
</reference>
<keyword id="KW-0413">Isomerase</keyword>
<keyword id="KW-1185">Reference proteome</keyword>
<keyword id="KW-0694">RNA-binding</keyword>
<comment type="catalytic activity">
    <reaction>
        <text>a uridine in RNA = a pseudouridine in RNA</text>
        <dbReference type="Rhea" id="RHEA:48348"/>
        <dbReference type="Rhea" id="RHEA-COMP:12068"/>
        <dbReference type="Rhea" id="RHEA-COMP:12069"/>
        <dbReference type="ChEBI" id="CHEBI:65314"/>
        <dbReference type="ChEBI" id="CHEBI:65315"/>
    </reaction>
</comment>
<comment type="similarity">
    <text evidence="3">Belongs to the pseudouridine synthase RluA family.</text>
</comment>
<name>Y1629_SYNY3</name>
<protein>
    <recommendedName>
        <fullName>Uncharacterized RNA pseudouridine synthase slr1629</fullName>
        <ecNumber>5.4.99.-</ecNumber>
    </recommendedName>
    <alternativeName>
        <fullName>RNA pseudouridylate synthase</fullName>
    </alternativeName>
    <alternativeName>
        <fullName>RNA-uridine isomerase</fullName>
    </alternativeName>
</protein>
<feature type="chain" id="PRO_0000162747" description="Uncharacterized RNA pseudouridine synthase slr1629">
    <location>
        <begin position="1"/>
        <end position="327"/>
    </location>
</feature>
<feature type="domain" description="S4 RNA-binding" evidence="2">
    <location>
        <begin position="32"/>
        <end position="105"/>
    </location>
</feature>
<feature type="active site" evidence="1">
    <location>
        <position position="156"/>
    </location>
</feature>